<keyword id="KW-0067">ATP-binding</keyword>
<keyword id="KW-0238">DNA-binding</keyword>
<keyword id="KW-0479">Metal-binding</keyword>
<keyword id="KW-0547">Nucleotide-binding</keyword>
<keyword id="KW-0678">Repressor</keyword>
<keyword id="KW-0804">Transcription</keyword>
<keyword id="KW-0805">Transcription regulation</keyword>
<keyword id="KW-0862">Zinc</keyword>
<keyword id="KW-0863">Zinc-finger</keyword>
<reference key="1">
    <citation type="journal article" date="2007" name="J. Bacteriol.">
        <title>Genome sequence and analysis of the soil cellulolytic actinomycete Thermobifida fusca YX.</title>
        <authorList>
            <person name="Lykidis A."/>
            <person name="Mavromatis K."/>
            <person name="Ivanova N."/>
            <person name="Anderson I."/>
            <person name="Land M."/>
            <person name="DiBartolo G."/>
            <person name="Martinez M."/>
            <person name="Lapidus A."/>
            <person name="Lucas S."/>
            <person name="Copeland A."/>
            <person name="Richardson P."/>
            <person name="Wilson D.B."/>
            <person name="Kyrpides N."/>
        </authorList>
    </citation>
    <scope>NUCLEOTIDE SEQUENCE [LARGE SCALE GENOMIC DNA]</scope>
    <source>
        <strain>YX</strain>
    </source>
</reference>
<organism>
    <name type="scientific">Thermobifida fusca (strain YX)</name>
    <dbReference type="NCBI Taxonomy" id="269800"/>
    <lineage>
        <taxon>Bacteria</taxon>
        <taxon>Bacillati</taxon>
        <taxon>Actinomycetota</taxon>
        <taxon>Actinomycetes</taxon>
        <taxon>Streptosporangiales</taxon>
        <taxon>Nocardiopsidaceae</taxon>
        <taxon>Thermobifida</taxon>
    </lineage>
</organism>
<comment type="function">
    <text evidence="1">Negatively regulates transcription of bacterial ribonucleotide reductase nrd genes and operons by binding to NrdR-boxes.</text>
</comment>
<comment type="cofactor">
    <cofactor evidence="1">
        <name>Zn(2+)</name>
        <dbReference type="ChEBI" id="CHEBI:29105"/>
    </cofactor>
    <text evidence="1">Binds 1 zinc ion.</text>
</comment>
<comment type="similarity">
    <text evidence="1">Belongs to the NrdR family.</text>
</comment>
<evidence type="ECO:0000255" key="1">
    <source>
        <dbReference type="HAMAP-Rule" id="MF_00440"/>
    </source>
</evidence>
<accession>Q47MY6</accession>
<feature type="chain" id="PRO_0000230902" description="Transcriptional repressor NrdR">
    <location>
        <begin position="1"/>
        <end position="153"/>
    </location>
</feature>
<feature type="domain" description="ATP-cone" evidence="1">
    <location>
        <begin position="46"/>
        <end position="136"/>
    </location>
</feature>
<feature type="zinc finger region" evidence="1">
    <location>
        <begin position="3"/>
        <end position="34"/>
    </location>
</feature>
<name>NRDR_THEFY</name>
<sequence length="153" mass="17288">MRCPFCHNQDTRVIDSRAAEEGTAIRRRRSCPACERRFTTQETVLLMVTKRSGATEPFSRSKIIAGVRRACQGRPVTEDALALLGQRVEEEIRSRGVAEVSSHEIGLTILGPLRDLDEVAYLRFASVYRSFESLEDFEREIAELRAERTATQG</sequence>
<proteinExistence type="inferred from homology"/>
<protein>
    <recommendedName>
        <fullName evidence="1">Transcriptional repressor NrdR</fullName>
    </recommendedName>
</protein>
<gene>
    <name evidence="1" type="primary">nrdR</name>
    <name type="ordered locus">Tfu_2150</name>
</gene>
<dbReference type="EMBL" id="CP000088">
    <property type="protein sequence ID" value="AAZ56183.1"/>
    <property type="molecule type" value="Genomic_DNA"/>
</dbReference>
<dbReference type="RefSeq" id="WP_011292573.1">
    <property type="nucleotide sequence ID" value="NC_007333.1"/>
</dbReference>
<dbReference type="SMR" id="Q47MY6"/>
<dbReference type="STRING" id="269800.Tfu_2150"/>
<dbReference type="KEGG" id="tfu:Tfu_2150"/>
<dbReference type="eggNOG" id="COG1327">
    <property type="taxonomic scope" value="Bacteria"/>
</dbReference>
<dbReference type="HOGENOM" id="CLU_108412_1_0_11"/>
<dbReference type="OrthoDB" id="9807461at2"/>
<dbReference type="GO" id="GO:0005524">
    <property type="term" value="F:ATP binding"/>
    <property type="evidence" value="ECO:0007669"/>
    <property type="project" value="UniProtKB-KW"/>
</dbReference>
<dbReference type="GO" id="GO:0003677">
    <property type="term" value="F:DNA binding"/>
    <property type="evidence" value="ECO:0007669"/>
    <property type="project" value="UniProtKB-KW"/>
</dbReference>
<dbReference type="GO" id="GO:0008270">
    <property type="term" value="F:zinc ion binding"/>
    <property type="evidence" value="ECO:0007669"/>
    <property type="project" value="UniProtKB-UniRule"/>
</dbReference>
<dbReference type="GO" id="GO:0045892">
    <property type="term" value="P:negative regulation of DNA-templated transcription"/>
    <property type="evidence" value="ECO:0007669"/>
    <property type="project" value="UniProtKB-UniRule"/>
</dbReference>
<dbReference type="HAMAP" id="MF_00440">
    <property type="entry name" value="NrdR"/>
    <property type="match status" value="1"/>
</dbReference>
<dbReference type="InterPro" id="IPR005144">
    <property type="entry name" value="ATP-cone_dom"/>
</dbReference>
<dbReference type="InterPro" id="IPR055173">
    <property type="entry name" value="NrdR-like_N"/>
</dbReference>
<dbReference type="InterPro" id="IPR003796">
    <property type="entry name" value="RNR_NrdR-like"/>
</dbReference>
<dbReference type="NCBIfam" id="TIGR00244">
    <property type="entry name" value="transcriptional regulator NrdR"/>
    <property type="match status" value="1"/>
</dbReference>
<dbReference type="PANTHER" id="PTHR30455">
    <property type="entry name" value="TRANSCRIPTIONAL REPRESSOR NRDR"/>
    <property type="match status" value="1"/>
</dbReference>
<dbReference type="PANTHER" id="PTHR30455:SF2">
    <property type="entry name" value="TRANSCRIPTIONAL REPRESSOR NRDR"/>
    <property type="match status" value="1"/>
</dbReference>
<dbReference type="Pfam" id="PF03477">
    <property type="entry name" value="ATP-cone"/>
    <property type="match status" value="1"/>
</dbReference>
<dbReference type="Pfam" id="PF22811">
    <property type="entry name" value="Zn_ribbon_NrdR"/>
    <property type="match status" value="1"/>
</dbReference>
<dbReference type="PROSITE" id="PS51161">
    <property type="entry name" value="ATP_CONE"/>
    <property type="match status" value="1"/>
</dbReference>